<comment type="function">
    <text>Involved in oxygen transport from the lung to the various peripheral tissues.</text>
</comment>
<comment type="subunit">
    <text>Heterotetramer of two alpha chains and two beta chains.</text>
</comment>
<comment type="tissue specificity">
    <text>Red blood cells.</text>
</comment>
<comment type="similarity">
    <text evidence="3">Belongs to the globin family.</text>
</comment>
<dbReference type="PIR" id="S06523">
    <property type="entry name" value="HBDD"/>
</dbReference>
<dbReference type="SMR" id="P18990"/>
<dbReference type="FunCoup" id="P18990">
    <property type="interactions" value="175"/>
</dbReference>
<dbReference type="STRING" id="9739.ENSTTRP00000016564"/>
<dbReference type="HOGENOM" id="CLU_003827_10_0_1"/>
<dbReference type="InParanoid" id="P18990"/>
<dbReference type="OMA" id="HAIVSIW"/>
<dbReference type="TreeFam" id="TF333268"/>
<dbReference type="Proteomes" id="UP000245320">
    <property type="component" value="Unplaced"/>
</dbReference>
<dbReference type="GO" id="GO:0072562">
    <property type="term" value="C:blood microparticle"/>
    <property type="evidence" value="ECO:0007669"/>
    <property type="project" value="TreeGrafter"/>
</dbReference>
<dbReference type="GO" id="GO:0031838">
    <property type="term" value="C:haptoglobin-hemoglobin complex"/>
    <property type="evidence" value="ECO:0007669"/>
    <property type="project" value="TreeGrafter"/>
</dbReference>
<dbReference type="GO" id="GO:0005833">
    <property type="term" value="C:hemoglobin complex"/>
    <property type="evidence" value="ECO:0007669"/>
    <property type="project" value="InterPro"/>
</dbReference>
<dbReference type="GO" id="GO:0031720">
    <property type="term" value="F:haptoglobin binding"/>
    <property type="evidence" value="ECO:0007669"/>
    <property type="project" value="TreeGrafter"/>
</dbReference>
<dbReference type="GO" id="GO:0020037">
    <property type="term" value="F:heme binding"/>
    <property type="evidence" value="ECO:0007669"/>
    <property type="project" value="InterPro"/>
</dbReference>
<dbReference type="GO" id="GO:0031721">
    <property type="term" value="F:hemoglobin alpha binding"/>
    <property type="evidence" value="ECO:0007669"/>
    <property type="project" value="TreeGrafter"/>
</dbReference>
<dbReference type="GO" id="GO:0046872">
    <property type="term" value="F:metal ion binding"/>
    <property type="evidence" value="ECO:0007669"/>
    <property type="project" value="UniProtKB-KW"/>
</dbReference>
<dbReference type="GO" id="GO:0043177">
    <property type="term" value="F:organic acid binding"/>
    <property type="evidence" value="ECO:0007669"/>
    <property type="project" value="TreeGrafter"/>
</dbReference>
<dbReference type="GO" id="GO:0019825">
    <property type="term" value="F:oxygen binding"/>
    <property type="evidence" value="ECO:0007669"/>
    <property type="project" value="InterPro"/>
</dbReference>
<dbReference type="GO" id="GO:0005344">
    <property type="term" value="F:oxygen carrier activity"/>
    <property type="evidence" value="ECO:0007669"/>
    <property type="project" value="UniProtKB-KW"/>
</dbReference>
<dbReference type="GO" id="GO:0004601">
    <property type="term" value="F:peroxidase activity"/>
    <property type="evidence" value="ECO:0007669"/>
    <property type="project" value="TreeGrafter"/>
</dbReference>
<dbReference type="GO" id="GO:0042744">
    <property type="term" value="P:hydrogen peroxide catabolic process"/>
    <property type="evidence" value="ECO:0007669"/>
    <property type="project" value="TreeGrafter"/>
</dbReference>
<dbReference type="CDD" id="cd08925">
    <property type="entry name" value="Hb-beta-like"/>
    <property type="match status" value="1"/>
</dbReference>
<dbReference type="FunFam" id="1.10.490.10:FF:000001">
    <property type="entry name" value="Hemoglobin subunit beta"/>
    <property type="match status" value="1"/>
</dbReference>
<dbReference type="Gene3D" id="1.10.490.10">
    <property type="entry name" value="Globins"/>
    <property type="match status" value="1"/>
</dbReference>
<dbReference type="InterPro" id="IPR000971">
    <property type="entry name" value="Globin"/>
</dbReference>
<dbReference type="InterPro" id="IPR009050">
    <property type="entry name" value="Globin-like_sf"/>
</dbReference>
<dbReference type="InterPro" id="IPR012292">
    <property type="entry name" value="Globin/Proto"/>
</dbReference>
<dbReference type="InterPro" id="IPR002337">
    <property type="entry name" value="Hemoglobin_b"/>
</dbReference>
<dbReference type="InterPro" id="IPR050056">
    <property type="entry name" value="Hemoglobin_oxygen_transport"/>
</dbReference>
<dbReference type="PANTHER" id="PTHR11442">
    <property type="entry name" value="HEMOGLOBIN FAMILY MEMBER"/>
    <property type="match status" value="1"/>
</dbReference>
<dbReference type="PANTHER" id="PTHR11442:SF42">
    <property type="entry name" value="HEMOGLOBIN SUBUNIT BETA"/>
    <property type="match status" value="1"/>
</dbReference>
<dbReference type="Pfam" id="PF00042">
    <property type="entry name" value="Globin"/>
    <property type="match status" value="1"/>
</dbReference>
<dbReference type="PRINTS" id="PR00814">
    <property type="entry name" value="BETAHAEM"/>
</dbReference>
<dbReference type="SUPFAM" id="SSF46458">
    <property type="entry name" value="Globin-like"/>
    <property type="match status" value="1"/>
</dbReference>
<dbReference type="PROSITE" id="PS01033">
    <property type="entry name" value="GLOBIN"/>
    <property type="match status" value="1"/>
</dbReference>
<name>HBB_TURTR</name>
<keyword id="KW-0007">Acetylation</keyword>
<keyword id="KW-0903">Direct protein sequencing</keyword>
<keyword id="KW-0349">Heme</keyword>
<keyword id="KW-0408">Iron</keyword>
<keyword id="KW-0479">Metal-binding</keyword>
<keyword id="KW-0561">Oxygen transport</keyword>
<keyword id="KW-0597">Phosphoprotein</keyword>
<keyword id="KW-1185">Reference proteome</keyword>
<keyword id="KW-0702">S-nitrosylation</keyword>
<keyword id="KW-0813">Transport</keyword>
<reference key="1">
    <citation type="journal article" date="1983" name="Biomed. Biochim. Acta">
        <title>The primary structure of hemoglobins from the bottlenosed dolphin (Tursiops truncatus, Cetacea).</title>
        <authorList>
            <person name="Kleinschmidt T."/>
            <person name="Braunitzer G."/>
        </authorList>
    </citation>
    <scope>PROTEIN SEQUENCE</scope>
</reference>
<proteinExistence type="evidence at protein level"/>
<organism>
    <name type="scientific">Tursiops truncatus</name>
    <name type="common">Atlantic bottle-nosed dolphin</name>
    <name type="synonym">Delphinus truncatus</name>
    <dbReference type="NCBI Taxonomy" id="9739"/>
    <lineage>
        <taxon>Eukaryota</taxon>
        <taxon>Metazoa</taxon>
        <taxon>Chordata</taxon>
        <taxon>Craniata</taxon>
        <taxon>Vertebrata</taxon>
        <taxon>Euteleostomi</taxon>
        <taxon>Mammalia</taxon>
        <taxon>Eutheria</taxon>
        <taxon>Laurasiatheria</taxon>
        <taxon>Artiodactyla</taxon>
        <taxon>Whippomorpha</taxon>
        <taxon>Cetacea</taxon>
        <taxon>Odontoceti</taxon>
        <taxon>Delphinidae</taxon>
        <taxon>Tursiops</taxon>
    </lineage>
</organism>
<accession>P18990</accession>
<protein>
    <recommendedName>
        <fullName>Hemoglobin subunit beta</fullName>
    </recommendedName>
    <alternativeName>
        <fullName>Beta-globin</fullName>
    </alternativeName>
    <alternativeName>
        <fullName>Hemoglobin beta chain</fullName>
    </alternativeName>
</protein>
<evidence type="ECO:0000250" key="1">
    <source>
        <dbReference type="UniProtKB" id="P02086"/>
    </source>
</evidence>
<evidence type="ECO:0000250" key="2">
    <source>
        <dbReference type="UniProtKB" id="P68871"/>
    </source>
</evidence>
<evidence type="ECO:0000255" key="3">
    <source>
        <dbReference type="PROSITE-ProRule" id="PRU00238"/>
    </source>
</evidence>
<sequence>VHLTGEEKSAVTALWGKVNVEEVGGEALGRLLVVYPWTQRFFESFGDLSTADAVMKNPNVKKHGQKVLASFGEGLKHLDDLKGTFAALSELHCDKLHVDPENFRLLGNVLVVVLARHFGKEFTPELQSAYQKVVAGVATALAHKYH</sequence>
<gene>
    <name type="primary">HBB</name>
</gene>
<feature type="chain" id="PRO_0000053144" description="Hemoglobin subunit beta">
    <location>
        <begin position="1"/>
        <end position="146"/>
    </location>
</feature>
<feature type="domain" description="Globin" evidence="3">
    <location>
        <begin position="2"/>
        <end position="146"/>
    </location>
</feature>
<feature type="binding site" description="distal binding residue">
    <location>
        <position position="63"/>
    </location>
    <ligand>
        <name>heme b</name>
        <dbReference type="ChEBI" id="CHEBI:60344"/>
    </ligand>
    <ligandPart>
        <name>Fe</name>
        <dbReference type="ChEBI" id="CHEBI:18248"/>
    </ligandPart>
</feature>
<feature type="binding site" description="proximal binding residue">
    <location>
        <position position="92"/>
    </location>
    <ligand>
        <name>heme b</name>
        <dbReference type="ChEBI" id="CHEBI:60344"/>
    </ligand>
    <ligandPart>
        <name>Fe</name>
        <dbReference type="ChEBI" id="CHEBI:18248"/>
    </ligandPart>
</feature>
<feature type="modified residue" description="N-acetylvaline" evidence="1">
    <location>
        <position position="1"/>
    </location>
</feature>
<feature type="modified residue" description="Phosphothreonine" evidence="2">
    <location>
        <position position="12"/>
    </location>
</feature>
<feature type="modified residue" description="Phosphoserine" evidence="2">
    <location>
        <position position="44"/>
    </location>
</feature>
<feature type="modified residue" description="N6-acetyllysine" evidence="2">
    <location>
        <position position="82"/>
    </location>
</feature>
<feature type="modified residue" description="S-nitrosocysteine" evidence="2">
    <location>
        <position position="93"/>
    </location>
</feature>
<feature type="modified residue" description="N6-acetyllysine" evidence="2">
    <location>
        <position position="144"/>
    </location>
</feature>